<feature type="chain" id="PRO_0000417742" description="CRISPR-associated endoribonuclease Cas2">
    <location>
        <begin position="1"/>
        <end position="93"/>
    </location>
</feature>
<feature type="binding site" evidence="1">
    <location>
        <position position="13"/>
    </location>
    <ligand>
        <name>Mg(2+)</name>
        <dbReference type="ChEBI" id="CHEBI:18420"/>
        <note>catalytic</note>
    </ligand>
</feature>
<dbReference type="EC" id="3.1.-.-" evidence="1"/>
<dbReference type="EMBL" id="CP000968">
    <property type="protein sequence ID" value="ACB07181.1"/>
    <property type="molecule type" value="Genomic_DNA"/>
</dbReference>
<dbReference type="RefSeq" id="WP_012309078.1">
    <property type="nucleotide sequence ID" value="NC_010482.1"/>
</dbReference>
<dbReference type="SMR" id="B1L402"/>
<dbReference type="STRING" id="374847.Kcr_0425"/>
<dbReference type="EnsemblBacteria" id="ACB07181">
    <property type="protein sequence ID" value="ACB07181"/>
    <property type="gene ID" value="Kcr_0425"/>
</dbReference>
<dbReference type="GeneID" id="6093712"/>
<dbReference type="KEGG" id="kcr:Kcr_0425"/>
<dbReference type="eggNOG" id="arCOG04194">
    <property type="taxonomic scope" value="Archaea"/>
</dbReference>
<dbReference type="HOGENOM" id="CLU_161124_2_1_2"/>
<dbReference type="InParanoid" id="B1L402"/>
<dbReference type="OrthoDB" id="75992at2157"/>
<dbReference type="PhylomeDB" id="B1L402"/>
<dbReference type="Proteomes" id="UP000001686">
    <property type="component" value="Chromosome"/>
</dbReference>
<dbReference type="GO" id="GO:0046872">
    <property type="term" value="F:metal ion binding"/>
    <property type="evidence" value="ECO:0007669"/>
    <property type="project" value="UniProtKB-UniRule"/>
</dbReference>
<dbReference type="GO" id="GO:0004521">
    <property type="term" value="F:RNA endonuclease activity"/>
    <property type="evidence" value="ECO:0007669"/>
    <property type="project" value="InterPro"/>
</dbReference>
<dbReference type="GO" id="GO:0051607">
    <property type="term" value="P:defense response to virus"/>
    <property type="evidence" value="ECO:0007669"/>
    <property type="project" value="UniProtKB-UniRule"/>
</dbReference>
<dbReference type="GO" id="GO:0043571">
    <property type="term" value="P:maintenance of CRISPR repeat elements"/>
    <property type="evidence" value="ECO:0007669"/>
    <property type="project" value="UniProtKB-UniRule"/>
</dbReference>
<dbReference type="CDD" id="cd09725">
    <property type="entry name" value="Cas2_I_II_III"/>
    <property type="match status" value="1"/>
</dbReference>
<dbReference type="Gene3D" id="3.30.70.240">
    <property type="match status" value="1"/>
</dbReference>
<dbReference type="HAMAP" id="MF_01471">
    <property type="entry name" value="Cas2"/>
    <property type="match status" value="1"/>
</dbReference>
<dbReference type="InterPro" id="IPR021127">
    <property type="entry name" value="CRISPR_associated_Cas2"/>
</dbReference>
<dbReference type="InterPro" id="IPR019199">
    <property type="entry name" value="Virulence_VapD/CRISPR_Cas2"/>
</dbReference>
<dbReference type="NCBIfam" id="TIGR01573">
    <property type="entry name" value="cas2"/>
    <property type="match status" value="1"/>
</dbReference>
<dbReference type="PANTHER" id="PTHR34405">
    <property type="entry name" value="CRISPR-ASSOCIATED ENDORIBONUCLEASE CAS2"/>
    <property type="match status" value="1"/>
</dbReference>
<dbReference type="PANTHER" id="PTHR34405:SF3">
    <property type="entry name" value="CRISPR-ASSOCIATED ENDORIBONUCLEASE CAS2 3"/>
    <property type="match status" value="1"/>
</dbReference>
<dbReference type="Pfam" id="PF09827">
    <property type="entry name" value="CRISPR_Cas2"/>
    <property type="match status" value="1"/>
</dbReference>
<dbReference type="SUPFAM" id="SSF143430">
    <property type="entry name" value="TTP0101/SSO1404-like"/>
    <property type="match status" value="1"/>
</dbReference>
<reference key="1">
    <citation type="journal article" date="2008" name="Proc. Natl. Acad. Sci. U.S.A.">
        <title>A korarchaeal genome reveals new insights into the evolution of the Archaea.</title>
        <authorList>
            <person name="Elkins J.G."/>
            <person name="Podar M."/>
            <person name="Graham D.E."/>
            <person name="Makarova K.S."/>
            <person name="Wolf Y."/>
            <person name="Randau L."/>
            <person name="Hedlund B.P."/>
            <person name="Brochier-Armanet C."/>
            <person name="Kunin V."/>
            <person name="Anderson I."/>
            <person name="Lapidus A."/>
            <person name="Goltsman E."/>
            <person name="Barry K."/>
            <person name="Koonin E.V."/>
            <person name="Hugenholtz P."/>
            <person name="Kyrpides N."/>
            <person name="Wanner G."/>
            <person name="Richardson P."/>
            <person name="Keller M."/>
            <person name="Stetter K.O."/>
        </authorList>
    </citation>
    <scope>NUCLEOTIDE SEQUENCE [LARGE SCALE GENOMIC DNA]</scope>
    <source>
        <strain>OPF8</strain>
    </source>
</reference>
<organism>
    <name type="scientific">Korarchaeum cryptofilum (strain OPF8)</name>
    <dbReference type="NCBI Taxonomy" id="374847"/>
    <lineage>
        <taxon>Archaea</taxon>
        <taxon>Thermoproteota</taxon>
        <taxon>Candidatus Korarchaeia</taxon>
        <taxon>Candidatus Korarchaeales</taxon>
        <taxon>Candidatus Korarchaeaceae</taxon>
        <taxon>Candidatus Korarchaeum</taxon>
    </lineage>
</organism>
<protein>
    <recommendedName>
        <fullName evidence="1">CRISPR-associated endoribonuclease Cas2</fullName>
        <ecNumber evidence="1">3.1.-.-</ecNumber>
    </recommendedName>
</protein>
<keyword id="KW-0051">Antiviral defense</keyword>
<keyword id="KW-0255">Endonuclease</keyword>
<keyword id="KW-0378">Hydrolase</keyword>
<keyword id="KW-0460">Magnesium</keyword>
<keyword id="KW-0479">Metal-binding</keyword>
<keyword id="KW-0540">Nuclease</keyword>
<keyword id="KW-1185">Reference proteome</keyword>
<comment type="function">
    <text evidence="1">CRISPR (clustered regularly interspaced short palindromic repeat), is an adaptive immune system that provides protection against mobile genetic elements (viruses, transposable elements and conjugative plasmids). CRISPR clusters contain sequences complementary to antecedent mobile elements and target invading nucleic acids. CRISPR clusters are transcribed and processed into CRISPR RNA (crRNA). Functions as a ssRNA-specific endoribonuclease. Involved in the integration of spacer DNA into the CRISPR cassette.</text>
</comment>
<comment type="cofactor">
    <cofactor evidence="1">
        <name>Mg(2+)</name>
        <dbReference type="ChEBI" id="CHEBI:18420"/>
    </cofactor>
</comment>
<comment type="subunit">
    <text evidence="1">Homodimer, forms a heterotetramer with a Cas1 homodimer.</text>
</comment>
<comment type="similarity">
    <text evidence="1">Belongs to the CRISPR-associated endoribonuclease Cas2 protein family.</text>
</comment>
<accession>B1L402</accession>
<gene>
    <name evidence="1" type="primary">cas2</name>
    <name type="ordered locus">Kcr_0425</name>
</gene>
<name>CAS2_KORCO</name>
<evidence type="ECO:0000255" key="1">
    <source>
        <dbReference type="HAMAP-Rule" id="MF_01471"/>
    </source>
</evidence>
<sequence length="93" mass="10630">MRGGNLKVLVVYDITDDSLRLKVAEILKDLGLFRIQKSAFIGEMTSQERENMEEILRRQNLGPSDRIDVFPICDRDLKMHSQIGRGKFGRGPP</sequence>
<proteinExistence type="inferred from homology"/>